<sequence>MSSISSAPQQQFSLRYHKASISYILPISSRYIYSADQSGLVIKWDLQIRRPKLQWQAHKDSILTILQWHQYIVTHSRDSTIKVWLEDILQFEMPVNALNYTNIVLYRDNYLITPATLDSNNVDVYKLKQHPIEVSRVIANISIFELVNKTRTNMHANKAGDGVDINVKYADEFAIDDKDNMQGRQDFGIIMKMLVIDMTIYIGFESGDIVGLHLEVPESKLTRGSNSTLLINREPRLKLEYQNTLLVPNPVISLANLNGLLVSGSTGTKVVIHSDPTRTVKFHLSGIHSIQTYQDRLVIGFWDGAIEYKGEIIQRPLPQIKGGLDINSNGDDENEEENLKSNVKLTSMTLSSFGNSSGSDTAKVQHVRKPKYSEMVKAKSMSDALFAGYEDGTIMGYALI</sequence>
<dbReference type="EMBL" id="CH981530">
    <property type="protein sequence ID" value="EDK46806.1"/>
    <property type="molecule type" value="Genomic_DNA"/>
</dbReference>
<dbReference type="RefSeq" id="XP_001524174.1">
    <property type="nucleotide sequence ID" value="XM_001524124.1"/>
</dbReference>
<dbReference type="FunCoup" id="A5E5U8">
    <property type="interactions" value="51"/>
</dbReference>
<dbReference type="STRING" id="379508.A5E5U8"/>
<dbReference type="VEuPathDB" id="FungiDB:LELG_04987"/>
<dbReference type="eggNOG" id="ENOG502QU4T">
    <property type="taxonomic scope" value="Eukaryota"/>
</dbReference>
<dbReference type="HOGENOM" id="CLU_045414_0_0_1"/>
<dbReference type="InParanoid" id="A5E5U8"/>
<dbReference type="OMA" id="LVCCNTQ"/>
<dbReference type="OrthoDB" id="7668193at2759"/>
<dbReference type="Proteomes" id="UP000001996">
    <property type="component" value="Unassembled WGS sequence"/>
</dbReference>
<dbReference type="GO" id="GO:0005634">
    <property type="term" value="C:nucleus"/>
    <property type="evidence" value="ECO:0007669"/>
    <property type="project" value="UniProtKB-SubCell"/>
</dbReference>
<dbReference type="GO" id="GO:0006325">
    <property type="term" value="P:chromatin organization"/>
    <property type="evidence" value="ECO:0007669"/>
    <property type="project" value="UniProtKB-KW"/>
</dbReference>
<dbReference type="Gene3D" id="2.130.10.10">
    <property type="entry name" value="YVTN repeat-like/Quinoprotein amine dehydrogenase"/>
    <property type="match status" value="1"/>
</dbReference>
<dbReference type="InterPro" id="IPR015943">
    <property type="entry name" value="WD40/YVTN_repeat-like_dom_sf"/>
</dbReference>
<dbReference type="InterPro" id="IPR036322">
    <property type="entry name" value="WD40_repeat_dom_sf"/>
</dbReference>
<dbReference type="SUPFAM" id="SSF50978">
    <property type="entry name" value="WD40 repeat-like"/>
    <property type="match status" value="1"/>
</dbReference>
<accession>A5E5U8</accession>
<comment type="function">
    <text evidence="1">Component of the ASTRA complex involved in chromatin remodeling.</text>
</comment>
<comment type="subunit">
    <text evidence="1">Component of the ASTRA chromatin remodeling machinery complex.</text>
</comment>
<comment type="subcellular location">
    <subcellularLocation>
        <location evidence="1">Nucleus</location>
    </subcellularLocation>
</comment>
<comment type="similarity">
    <text evidence="2">Belongs to the WD repeat ASA1 family.</text>
</comment>
<organism>
    <name type="scientific">Lodderomyces elongisporus (strain ATCC 11503 / CBS 2605 / JCM 1781 / NBRC 1676 / NRRL YB-4239)</name>
    <name type="common">Yeast</name>
    <name type="synonym">Saccharomyces elongisporus</name>
    <dbReference type="NCBI Taxonomy" id="379508"/>
    <lineage>
        <taxon>Eukaryota</taxon>
        <taxon>Fungi</taxon>
        <taxon>Dikarya</taxon>
        <taxon>Ascomycota</taxon>
        <taxon>Saccharomycotina</taxon>
        <taxon>Pichiomycetes</taxon>
        <taxon>Debaryomycetaceae</taxon>
        <taxon>Candida/Lodderomyces clade</taxon>
        <taxon>Lodderomyces</taxon>
    </lineage>
</organism>
<protein>
    <recommendedName>
        <fullName>ASTRA-associated protein 1</fullName>
    </recommendedName>
</protein>
<proteinExistence type="inferred from homology"/>
<keyword id="KW-0156">Chromatin regulator</keyword>
<keyword id="KW-0539">Nucleus</keyword>
<keyword id="KW-1185">Reference proteome</keyword>
<keyword id="KW-0677">Repeat</keyword>
<keyword id="KW-0853">WD repeat</keyword>
<name>ASA1_LODEL</name>
<gene>
    <name type="primary">ASA1</name>
    <name type="ORF">LELG_04987</name>
</gene>
<reference key="1">
    <citation type="journal article" date="2009" name="Nature">
        <title>Evolution of pathogenicity and sexual reproduction in eight Candida genomes.</title>
        <authorList>
            <person name="Butler G."/>
            <person name="Rasmussen M.D."/>
            <person name="Lin M.F."/>
            <person name="Santos M.A.S."/>
            <person name="Sakthikumar S."/>
            <person name="Munro C.A."/>
            <person name="Rheinbay E."/>
            <person name="Grabherr M."/>
            <person name="Forche A."/>
            <person name="Reedy J.L."/>
            <person name="Agrafioti I."/>
            <person name="Arnaud M.B."/>
            <person name="Bates S."/>
            <person name="Brown A.J.P."/>
            <person name="Brunke S."/>
            <person name="Costanzo M.C."/>
            <person name="Fitzpatrick D.A."/>
            <person name="de Groot P.W.J."/>
            <person name="Harris D."/>
            <person name="Hoyer L.L."/>
            <person name="Hube B."/>
            <person name="Klis F.M."/>
            <person name="Kodira C."/>
            <person name="Lennard N."/>
            <person name="Logue M.E."/>
            <person name="Martin R."/>
            <person name="Neiman A.M."/>
            <person name="Nikolaou E."/>
            <person name="Quail M.A."/>
            <person name="Quinn J."/>
            <person name="Santos M.C."/>
            <person name="Schmitzberger F.F."/>
            <person name="Sherlock G."/>
            <person name="Shah P."/>
            <person name="Silverstein K.A.T."/>
            <person name="Skrzypek M.S."/>
            <person name="Soll D."/>
            <person name="Staggs R."/>
            <person name="Stansfield I."/>
            <person name="Stumpf M.P.H."/>
            <person name="Sudbery P.E."/>
            <person name="Srikantha T."/>
            <person name="Zeng Q."/>
            <person name="Berman J."/>
            <person name="Berriman M."/>
            <person name="Heitman J."/>
            <person name="Gow N.A.R."/>
            <person name="Lorenz M.C."/>
            <person name="Birren B.W."/>
            <person name="Kellis M."/>
            <person name="Cuomo C.A."/>
        </authorList>
    </citation>
    <scope>NUCLEOTIDE SEQUENCE [LARGE SCALE GENOMIC DNA]</scope>
    <source>
        <strain>ATCC 11503 / BCRC 21390 / CBS 2605 / JCM 1781 / NBRC 1676 / NRRL YB-4239</strain>
    </source>
</reference>
<evidence type="ECO:0000250" key="1"/>
<evidence type="ECO:0000305" key="2"/>
<feature type="chain" id="PRO_0000402213" description="ASTRA-associated protein 1">
    <location>
        <begin position="1"/>
        <end position="400"/>
    </location>
</feature>
<feature type="repeat" description="WD 1">
    <location>
        <begin position="6"/>
        <end position="54"/>
    </location>
</feature>
<feature type="repeat" description="WD 2">
    <location>
        <begin position="57"/>
        <end position="94"/>
    </location>
</feature>
<feature type="repeat" description="WD 3">
    <location>
        <begin position="240"/>
        <end position="272"/>
    </location>
</feature>
<feature type="repeat" description="WD 4">
    <location>
        <begin position="273"/>
        <end position="312"/>
    </location>
</feature>